<accession>B4U7J9</accession>
<keyword id="KW-0067">ATP-binding</keyword>
<keyword id="KW-0520">NAD</keyword>
<keyword id="KW-0547">Nucleotide-binding</keyword>
<keyword id="KW-0548">Nucleotidyltransferase</keyword>
<keyword id="KW-0662">Pyridine nucleotide biosynthesis</keyword>
<keyword id="KW-0808">Transferase</keyword>
<sequence>MGIAFFGGSFDPIHIGHILVARDVCELCDVDKIYFMPAFISPFKPKPIASPKQRFEMLKLALEDEPWAFIEDIELKKEEISYTYKSALILKEKYQQPPTFIIGYDAYLTLDKWYRYEDLVKIANFIVVKRGKEDIFINNDIDAIFCNTRTIDISSTEIRERIKHGKSVKYMIPDKVLEFILKEGIYAKS</sequence>
<organism>
    <name type="scientific">Hydrogenobaculum sp. (strain Y04AAS1)</name>
    <dbReference type="NCBI Taxonomy" id="380749"/>
    <lineage>
        <taxon>Bacteria</taxon>
        <taxon>Pseudomonadati</taxon>
        <taxon>Aquificota</taxon>
        <taxon>Aquificia</taxon>
        <taxon>Aquificales</taxon>
        <taxon>Aquificaceae</taxon>
        <taxon>Hydrogenobaculum</taxon>
    </lineage>
</organism>
<evidence type="ECO:0000255" key="1">
    <source>
        <dbReference type="HAMAP-Rule" id="MF_00244"/>
    </source>
</evidence>
<comment type="function">
    <text evidence="1">Catalyzes the reversible adenylation of nicotinate mononucleotide (NaMN) to nicotinic acid adenine dinucleotide (NaAD).</text>
</comment>
<comment type="catalytic activity">
    <reaction evidence="1">
        <text>nicotinate beta-D-ribonucleotide + ATP + H(+) = deamido-NAD(+) + diphosphate</text>
        <dbReference type="Rhea" id="RHEA:22860"/>
        <dbReference type="ChEBI" id="CHEBI:15378"/>
        <dbReference type="ChEBI" id="CHEBI:30616"/>
        <dbReference type="ChEBI" id="CHEBI:33019"/>
        <dbReference type="ChEBI" id="CHEBI:57502"/>
        <dbReference type="ChEBI" id="CHEBI:58437"/>
        <dbReference type="EC" id="2.7.7.18"/>
    </reaction>
</comment>
<comment type="pathway">
    <text evidence="1">Cofactor biosynthesis; NAD(+) biosynthesis; deamido-NAD(+) from nicotinate D-ribonucleotide: step 1/1.</text>
</comment>
<comment type="similarity">
    <text evidence="1">Belongs to the NadD family.</text>
</comment>
<name>NADD_HYDS0</name>
<feature type="chain" id="PRO_1000100781" description="Probable nicotinate-nucleotide adenylyltransferase">
    <location>
        <begin position="1"/>
        <end position="189"/>
    </location>
</feature>
<gene>
    <name evidence="1" type="primary">nadD</name>
    <name type="ordered locus">HY04AAS1_0420</name>
</gene>
<protein>
    <recommendedName>
        <fullName evidence="1">Probable nicotinate-nucleotide adenylyltransferase</fullName>
        <ecNumber evidence="1">2.7.7.18</ecNumber>
    </recommendedName>
    <alternativeName>
        <fullName evidence="1">Deamido-NAD(+) diphosphorylase</fullName>
    </alternativeName>
    <alternativeName>
        <fullName evidence="1">Deamido-NAD(+) pyrophosphorylase</fullName>
    </alternativeName>
    <alternativeName>
        <fullName evidence="1">Nicotinate mononucleotide adenylyltransferase</fullName>
        <shortName evidence="1">NaMN adenylyltransferase</shortName>
    </alternativeName>
</protein>
<reference key="1">
    <citation type="journal article" date="2009" name="J. Bacteriol.">
        <title>Complete and draft genome sequences of six members of the Aquificales.</title>
        <authorList>
            <person name="Reysenbach A.-L."/>
            <person name="Hamamura N."/>
            <person name="Podar M."/>
            <person name="Griffiths E."/>
            <person name="Ferreira S."/>
            <person name="Hochstein R."/>
            <person name="Heidelberg J."/>
            <person name="Johnson J."/>
            <person name="Mead D."/>
            <person name="Pohorille A."/>
            <person name="Sarmiento M."/>
            <person name="Schweighofer K."/>
            <person name="Seshadri R."/>
            <person name="Voytek M.A."/>
        </authorList>
    </citation>
    <scope>NUCLEOTIDE SEQUENCE [LARGE SCALE GENOMIC DNA]</scope>
    <source>
        <strain>Y04AAS1</strain>
    </source>
</reference>
<proteinExistence type="inferred from homology"/>
<dbReference type="EC" id="2.7.7.18" evidence="1"/>
<dbReference type="EMBL" id="CP001130">
    <property type="protein sequence ID" value="ACG57110.1"/>
    <property type="molecule type" value="Genomic_DNA"/>
</dbReference>
<dbReference type="RefSeq" id="WP_012513466.1">
    <property type="nucleotide sequence ID" value="NC_011126.1"/>
</dbReference>
<dbReference type="SMR" id="B4U7J9"/>
<dbReference type="STRING" id="380749.HY04AAS1_0420"/>
<dbReference type="KEGG" id="hya:HY04AAS1_0420"/>
<dbReference type="eggNOG" id="COG1057">
    <property type="taxonomic scope" value="Bacteria"/>
</dbReference>
<dbReference type="HOGENOM" id="CLU_069765_3_1_0"/>
<dbReference type="OrthoDB" id="5295945at2"/>
<dbReference type="UniPathway" id="UPA00253">
    <property type="reaction ID" value="UER00332"/>
</dbReference>
<dbReference type="GO" id="GO:0005524">
    <property type="term" value="F:ATP binding"/>
    <property type="evidence" value="ECO:0007669"/>
    <property type="project" value="UniProtKB-KW"/>
</dbReference>
<dbReference type="GO" id="GO:0004515">
    <property type="term" value="F:nicotinate-nucleotide adenylyltransferase activity"/>
    <property type="evidence" value="ECO:0007669"/>
    <property type="project" value="UniProtKB-UniRule"/>
</dbReference>
<dbReference type="GO" id="GO:0009435">
    <property type="term" value="P:NAD biosynthetic process"/>
    <property type="evidence" value="ECO:0007669"/>
    <property type="project" value="UniProtKB-UniRule"/>
</dbReference>
<dbReference type="CDD" id="cd02165">
    <property type="entry name" value="NMNAT"/>
    <property type="match status" value="1"/>
</dbReference>
<dbReference type="Gene3D" id="3.40.50.620">
    <property type="entry name" value="HUPs"/>
    <property type="match status" value="1"/>
</dbReference>
<dbReference type="HAMAP" id="MF_00244">
    <property type="entry name" value="NaMN_adenylyltr"/>
    <property type="match status" value="1"/>
</dbReference>
<dbReference type="InterPro" id="IPR004821">
    <property type="entry name" value="Cyt_trans-like"/>
</dbReference>
<dbReference type="InterPro" id="IPR005248">
    <property type="entry name" value="NadD/NMNAT"/>
</dbReference>
<dbReference type="InterPro" id="IPR014729">
    <property type="entry name" value="Rossmann-like_a/b/a_fold"/>
</dbReference>
<dbReference type="NCBIfam" id="TIGR00125">
    <property type="entry name" value="cyt_tran_rel"/>
    <property type="match status" value="1"/>
</dbReference>
<dbReference type="NCBIfam" id="TIGR00482">
    <property type="entry name" value="nicotinate (nicotinamide) nucleotide adenylyltransferase"/>
    <property type="match status" value="1"/>
</dbReference>
<dbReference type="PANTHER" id="PTHR39321">
    <property type="entry name" value="NICOTINATE-NUCLEOTIDE ADENYLYLTRANSFERASE-RELATED"/>
    <property type="match status" value="1"/>
</dbReference>
<dbReference type="PANTHER" id="PTHR39321:SF3">
    <property type="entry name" value="PHOSPHOPANTETHEINE ADENYLYLTRANSFERASE"/>
    <property type="match status" value="1"/>
</dbReference>
<dbReference type="Pfam" id="PF01467">
    <property type="entry name" value="CTP_transf_like"/>
    <property type="match status" value="1"/>
</dbReference>
<dbReference type="SUPFAM" id="SSF52374">
    <property type="entry name" value="Nucleotidylyl transferase"/>
    <property type="match status" value="1"/>
</dbReference>